<feature type="chain" id="PRO_1000116073" description="Ferrochelatase">
    <location>
        <begin position="1"/>
        <end position="320"/>
    </location>
</feature>
<feature type="binding site" evidence="1">
    <location>
        <position position="194"/>
    </location>
    <ligand>
        <name>Fe cation</name>
        <dbReference type="ChEBI" id="CHEBI:24875"/>
    </ligand>
</feature>
<feature type="binding site" evidence="1">
    <location>
        <position position="275"/>
    </location>
    <ligand>
        <name>Fe cation</name>
        <dbReference type="ChEBI" id="CHEBI:24875"/>
    </ligand>
</feature>
<sequence>MRQTKTGILLANLGTPDAPTPEAVKRYLKQFLSDRRVVDTPRLLWWPLLRGVILPLRSPRVAKLYQSIWMDGGSPLMVYSREQQQALAARLPDTPVALGMSYGSPSLESAVDELLASDVDHIVVLPLYPQYSCSTVGAVWDELGRILARKRRIPGISFIRDYADDGAYIDALAKSARESFARHGEPDVLLLSYHGIPQRYADEGDDYPQRCRDTTRELVSALGLPPEKVMMTFQSRFGREPWLTPYTDETLKMLGEKGTGHIQVMCPGFAADCLETLEEIAEQNREIFLEAGGKKYAYIPALNATPEHIDMMLKLTAPYR</sequence>
<accession>B5EXN2</accession>
<proteinExistence type="inferred from homology"/>
<protein>
    <recommendedName>
        <fullName evidence="1">Ferrochelatase</fullName>
        <ecNumber evidence="1">4.98.1.1</ecNumber>
    </recommendedName>
    <alternativeName>
        <fullName evidence="1">Heme synthase</fullName>
    </alternativeName>
    <alternativeName>
        <fullName evidence="1">Protoheme ferro-lyase</fullName>
    </alternativeName>
</protein>
<comment type="function">
    <text evidence="1">Catalyzes the ferrous insertion into protoporphyrin IX.</text>
</comment>
<comment type="catalytic activity">
    <reaction evidence="1">
        <text>heme b + 2 H(+) = protoporphyrin IX + Fe(2+)</text>
        <dbReference type="Rhea" id="RHEA:22584"/>
        <dbReference type="ChEBI" id="CHEBI:15378"/>
        <dbReference type="ChEBI" id="CHEBI:29033"/>
        <dbReference type="ChEBI" id="CHEBI:57306"/>
        <dbReference type="ChEBI" id="CHEBI:60344"/>
        <dbReference type="EC" id="4.98.1.1"/>
    </reaction>
</comment>
<comment type="pathway">
    <text evidence="1">Porphyrin-containing compound metabolism; protoheme biosynthesis; protoheme from protoporphyrin-IX: step 1/1.</text>
</comment>
<comment type="subunit">
    <text evidence="1">Monomer.</text>
</comment>
<comment type="subcellular location">
    <subcellularLocation>
        <location evidence="1">Cytoplasm</location>
    </subcellularLocation>
</comment>
<comment type="similarity">
    <text evidence="1">Belongs to the ferrochelatase family.</text>
</comment>
<keyword id="KW-0963">Cytoplasm</keyword>
<keyword id="KW-0350">Heme biosynthesis</keyword>
<keyword id="KW-0408">Iron</keyword>
<keyword id="KW-0456">Lyase</keyword>
<keyword id="KW-0479">Metal-binding</keyword>
<keyword id="KW-0627">Porphyrin biosynthesis</keyword>
<organism>
    <name type="scientific">Salmonella agona (strain SL483)</name>
    <dbReference type="NCBI Taxonomy" id="454166"/>
    <lineage>
        <taxon>Bacteria</taxon>
        <taxon>Pseudomonadati</taxon>
        <taxon>Pseudomonadota</taxon>
        <taxon>Gammaproteobacteria</taxon>
        <taxon>Enterobacterales</taxon>
        <taxon>Enterobacteriaceae</taxon>
        <taxon>Salmonella</taxon>
    </lineage>
</organism>
<reference key="1">
    <citation type="journal article" date="2011" name="J. Bacteriol.">
        <title>Comparative genomics of 28 Salmonella enterica isolates: evidence for CRISPR-mediated adaptive sublineage evolution.</title>
        <authorList>
            <person name="Fricke W.F."/>
            <person name="Mammel M.K."/>
            <person name="McDermott P.F."/>
            <person name="Tartera C."/>
            <person name="White D.G."/>
            <person name="Leclerc J.E."/>
            <person name="Ravel J."/>
            <person name="Cebula T.A."/>
        </authorList>
    </citation>
    <scope>NUCLEOTIDE SEQUENCE [LARGE SCALE GENOMIC DNA]</scope>
    <source>
        <strain>SL483</strain>
    </source>
</reference>
<name>HEMH_SALA4</name>
<evidence type="ECO:0000255" key="1">
    <source>
        <dbReference type="HAMAP-Rule" id="MF_00323"/>
    </source>
</evidence>
<dbReference type="EC" id="4.98.1.1" evidence="1"/>
<dbReference type="EMBL" id="CP001138">
    <property type="protein sequence ID" value="ACH49986.1"/>
    <property type="molecule type" value="Genomic_DNA"/>
</dbReference>
<dbReference type="RefSeq" id="WP_001250078.1">
    <property type="nucleotide sequence ID" value="NC_011149.1"/>
</dbReference>
<dbReference type="SMR" id="B5EXN2"/>
<dbReference type="KEGG" id="sea:SeAg_B0535"/>
<dbReference type="HOGENOM" id="CLU_018884_0_0_6"/>
<dbReference type="UniPathway" id="UPA00252">
    <property type="reaction ID" value="UER00325"/>
</dbReference>
<dbReference type="Proteomes" id="UP000008819">
    <property type="component" value="Chromosome"/>
</dbReference>
<dbReference type="GO" id="GO:0005737">
    <property type="term" value="C:cytoplasm"/>
    <property type="evidence" value="ECO:0007669"/>
    <property type="project" value="UniProtKB-SubCell"/>
</dbReference>
<dbReference type="GO" id="GO:0004325">
    <property type="term" value="F:ferrochelatase activity"/>
    <property type="evidence" value="ECO:0007669"/>
    <property type="project" value="UniProtKB-UniRule"/>
</dbReference>
<dbReference type="GO" id="GO:0046872">
    <property type="term" value="F:metal ion binding"/>
    <property type="evidence" value="ECO:0007669"/>
    <property type="project" value="UniProtKB-KW"/>
</dbReference>
<dbReference type="GO" id="GO:0006783">
    <property type="term" value="P:heme biosynthetic process"/>
    <property type="evidence" value="ECO:0007669"/>
    <property type="project" value="UniProtKB-UniRule"/>
</dbReference>
<dbReference type="CDD" id="cd00419">
    <property type="entry name" value="Ferrochelatase_C"/>
    <property type="match status" value="1"/>
</dbReference>
<dbReference type="CDD" id="cd03411">
    <property type="entry name" value="Ferrochelatase_N"/>
    <property type="match status" value="1"/>
</dbReference>
<dbReference type="FunFam" id="3.40.50.1400:FF:000004">
    <property type="entry name" value="Ferrochelatase"/>
    <property type="match status" value="1"/>
</dbReference>
<dbReference type="Gene3D" id="3.40.50.1400">
    <property type="match status" value="2"/>
</dbReference>
<dbReference type="HAMAP" id="MF_00323">
    <property type="entry name" value="Ferrochelatase"/>
    <property type="match status" value="1"/>
</dbReference>
<dbReference type="InterPro" id="IPR001015">
    <property type="entry name" value="Ferrochelatase"/>
</dbReference>
<dbReference type="InterPro" id="IPR019772">
    <property type="entry name" value="Ferrochelatase_AS"/>
</dbReference>
<dbReference type="InterPro" id="IPR033644">
    <property type="entry name" value="Ferrochelatase_C"/>
</dbReference>
<dbReference type="InterPro" id="IPR033659">
    <property type="entry name" value="Ferrochelatase_N"/>
</dbReference>
<dbReference type="NCBIfam" id="TIGR00109">
    <property type="entry name" value="hemH"/>
    <property type="match status" value="1"/>
</dbReference>
<dbReference type="PANTHER" id="PTHR11108">
    <property type="entry name" value="FERROCHELATASE"/>
    <property type="match status" value="1"/>
</dbReference>
<dbReference type="PANTHER" id="PTHR11108:SF1">
    <property type="entry name" value="FERROCHELATASE, MITOCHONDRIAL"/>
    <property type="match status" value="1"/>
</dbReference>
<dbReference type="Pfam" id="PF00762">
    <property type="entry name" value="Ferrochelatase"/>
    <property type="match status" value="1"/>
</dbReference>
<dbReference type="SUPFAM" id="SSF53800">
    <property type="entry name" value="Chelatase"/>
    <property type="match status" value="1"/>
</dbReference>
<dbReference type="PROSITE" id="PS00534">
    <property type="entry name" value="FERROCHELATASE"/>
    <property type="match status" value="1"/>
</dbReference>
<gene>
    <name evidence="1" type="primary">hemH</name>
    <name type="ordered locus">SeAg_B0535</name>
</gene>